<proteinExistence type="inferred from homology"/>
<name>PIMT_RALN1</name>
<sequence length="321" mass="33643">MSERSRGRRFPLTLDAVVERKPAERQREKRISSGVNAVSLPTPARTASAERASSTPAPGPGPQRVAGVDAAVGAVAASAVQARTQAAHAAAGGMASDRARQALVARVQAAGVTDARVLAAIGRVPRHLFVDAGLASQAYEDAALPIGHQQTISKPSVVGRMIELLLRERPEPSAQAAQVPAQPLSRVLEIGTGCGYQAAVLSQVAGEVYSIERIRPLHEKAKANLRPLRVPNIRLHYGDGMLGLPKAAPFDAIIVAAAGLEVPQALLDQLAIGGRLIAPVATDRAGGPSQQLVLIERRGRFQFHSTALEGVFFVPLKSGTV</sequence>
<accession>Q8Y039</accession>
<keyword id="KW-0963">Cytoplasm</keyword>
<keyword id="KW-0489">Methyltransferase</keyword>
<keyword id="KW-1185">Reference proteome</keyword>
<keyword id="KW-0949">S-adenosyl-L-methionine</keyword>
<keyword id="KW-0808">Transferase</keyword>
<reference key="1">
    <citation type="journal article" date="2002" name="Nature">
        <title>Genome sequence of the plant pathogen Ralstonia solanacearum.</title>
        <authorList>
            <person name="Salanoubat M."/>
            <person name="Genin S."/>
            <person name="Artiguenave F."/>
            <person name="Gouzy J."/>
            <person name="Mangenot S."/>
            <person name="Arlat M."/>
            <person name="Billault A."/>
            <person name="Brottier P."/>
            <person name="Camus J.-C."/>
            <person name="Cattolico L."/>
            <person name="Chandler M."/>
            <person name="Choisne N."/>
            <person name="Claudel-Renard C."/>
            <person name="Cunnac S."/>
            <person name="Demange N."/>
            <person name="Gaspin C."/>
            <person name="Lavie M."/>
            <person name="Moisan A."/>
            <person name="Robert C."/>
            <person name="Saurin W."/>
            <person name="Schiex T."/>
            <person name="Siguier P."/>
            <person name="Thebault P."/>
            <person name="Whalen M."/>
            <person name="Wincker P."/>
            <person name="Levy M."/>
            <person name="Weissenbach J."/>
            <person name="Boucher C.A."/>
        </authorList>
    </citation>
    <scope>NUCLEOTIDE SEQUENCE [LARGE SCALE GENOMIC DNA]</scope>
    <source>
        <strain>ATCC BAA-1114 / GMI1000</strain>
    </source>
</reference>
<gene>
    <name evidence="1" type="primary">pcm</name>
    <name type="ordered locus">RSc1205</name>
</gene>
<protein>
    <recommendedName>
        <fullName evidence="1">Protein-L-isoaspartate O-methyltransferase</fullName>
        <ecNumber evidence="1">2.1.1.77</ecNumber>
    </recommendedName>
    <alternativeName>
        <fullName evidence="1">L-isoaspartyl protein carboxyl methyltransferase</fullName>
    </alternativeName>
    <alternativeName>
        <fullName evidence="1">Protein L-isoaspartyl methyltransferase</fullName>
    </alternativeName>
    <alternativeName>
        <fullName evidence="1">Protein-beta-aspartate methyltransferase</fullName>
        <shortName evidence="1">PIMT</shortName>
    </alternativeName>
</protein>
<organism>
    <name type="scientific">Ralstonia nicotianae (strain ATCC BAA-1114 / GMI1000)</name>
    <name type="common">Ralstonia solanacearum</name>
    <dbReference type="NCBI Taxonomy" id="267608"/>
    <lineage>
        <taxon>Bacteria</taxon>
        <taxon>Pseudomonadati</taxon>
        <taxon>Pseudomonadota</taxon>
        <taxon>Betaproteobacteria</taxon>
        <taxon>Burkholderiales</taxon>
        <taxon>Burkholderiaceae</taxon>
        <taxon>Ralstonia</taxon>
        <taxon>Ralstonia solanacearum species complex</taxon>
    </lineage>
</organism>
<evidence type="ECO:0000255" key="1">
    <source>
        <dbReference type="HAMAP-Rule" id="MF_00090"/>
    </source>
</evidence>
<evidence type="ECO:0000256" key="2">
    <source>
        <dbReference type="SAM" id="MobiDB-lite"/>
    </source>
</evidence>
<dbReference type="EC" id="2.1.1.77" evidence="1"/>
<dbReference type="EMBL" id="AL646052">
    <property type="protein sequence ID" value="CAD14907.1"/>
    <property type="molecule type" value="Genomic_DNA"/>
</dbReference>
<dbReference type="RefSeq" id="WP_011001155.1">
    <property type="nucleotide sequence ID" value="NC_003295.1"/>
</dbReference>
<dbReference type="SMR" id="Q8Y039"/>
<dbReference type="STRING" id="267608.RSc1205"/>
<dbReference type="EnsemblBacteria" id="CAD14907">
    <property type="protein sequence ID" value="CAD14907"/>
    <property type="gene ID" value="RSc1205"/>
</dbReference>
<dbReference type="KEGG" id="rso:RSc1205"/>
<dbReference type="PATRIC" id="fig|267608.8.peg.1224"/>
<dbReference type="eggNOG" id="COG2518">
    <property type="taxonomic scope" value="Bacteria"/>
</dbReference>
<dbReference type="HOGENOM" id="CLU_055432_1_0_4"/>
<dbReference type="Proteomes" id="UP000001436">
    <property type="component" value="Chromosome"/>
</dbReference>
<dbReference type="GO" id="GO:0005737">
    <property type="term" value="C:cytoplasm"/>
    <property type="evidence" value="ECO:0007669"/>
    <property type="project" value="UniProtKB-SubCell"/>
</dbReference>
<dbReference type="GO" id="GO:0004719">
    <property type="term" value="F:protein-L-isoaspartate (D-aspartate) O-methyltransferase activity"/>
    <property type="evidence" value="ECO:0007669"/>
    <property type="project" value="UniProtKB-UniRule"/>
</dbReference>
<dbReference type="GO" id="GO:0032259">
    <property type="term" value="P:methylation"/>
    <property type="evidence" value="ECO:0007669"/>
    <property type="project" value="UniProtKB-KW"/>
</dbReference>
<dbReference type="GO" id="GO:0036211">
    <property type="term" value="P:protein modification process"/>
    <property type="evidence" value="ECO:0007669"/>
    <property type="project" value="UniProtKB-UniRule"/>
</dbReference>
<dbReference type="GO" id="GO:0030091">
    <property type="term" value="P:protein repair"/>
    <property type="evidence" value="ECO:0007669"/>
    <property type="project" value="UniProtKB-UniRule"/>
</dbReference>
<dbReference type="CDD" id="cd02440">
    <property type="entry name" value="AdoMet_MTases"/>
    <property type="match status" value="1"/>
</dbReference>
<dbReference type="FunFam" id="3.40.50.150:FF:000010">
    <property type="entry name" value="Protein-L-isoaspartate O-methyltransferase"/>
    <property type="match status" value="1"/>
</dbReference>
<dbReference type="Gene3D" id="3.40.50.150">
    <property type="entry name" value="Vaccinia Virus protein VP39"/>
    <property type="match status" value="1"/>
</dbReference>
<dbReference type="HAMAP" id="MF_00090">
    <property type="entry name" value="PIMT"/>
    <property type="match status" value="1"/>
</dbReference>
<dbReference type="InterPro" id="IPR000682">
    <property type="entry name" value="PCMT"/>
</dbReference>
<dbReference type="InterPro" id="IPR029063">
    <property type="entry name" value="SAM-dependent_MTases_sf"/>
</dbReference>
<dbReference type="NCBIfam" id="TIGR00080">
    <property type="entry name" value="pimt"/>
    <property type="match status" value="1"/>
</dbReference>
<dbReference type="NCBIfam" id="NF001453">
    <property type="entry name" value="PRK00312.1"/>
    <property type="match status" value="1"/>
</dbReference>
<dbReference type="PANTHER" id="PTHR11579">
    <property type="entry name" value="PROTEIN-L-ISOASPARTATE O-METHYLTRANSFERASE"/>
    <property type="match status" value="1"/>
</dbReference>
<dbReference type="PANTHER" id="PTHR11579:SF0">
    <property type="entry name" value="PROTEIN-L-ISOASPARTATE(D-ASPARTATE) O-METHYLTRANSFERASE"/>
    <property type="match status" value="1"/>
</dbReference>
<dbReference type="Pfam" id="PF01135">
    <property type="entry name" value="PCMT"/>
    <property type="match status" value="1"/>
</dbReference>
<dbReference type="SUPFAM" id="SSF53335">
    <property type="entry name" value="S-adenosyl-L-methionine-dependent methyltransferases"/>
    <property type="match status" value="1"/>
</dbReference>
<dbReference type="PROSITE" id="PS01279">
    <property type="entry name" value="PCMT"/>
    <property type="match status" value="1"/>
</dbReference>
<comment type="function">
    <text evidence="1">Catalyzes the methyl esterification of L-isoaspartyl residues in peptides and proteins that result from spontaneous decomposition of normal L-aspartyl and L-asparaginyl residues. It plays a role in the repair and/or degradation of damaged proteins.</text>
</comment>
<comment type="catalytic activity">
    <reaction evidence="1">
        <text>[protein]-L-isoaspartate + S-adenosyl-L-methionine = [protein]-L-isoaspartate alpha-methyl ester + S-adenosyl-L-homocysteine</text>
        <dbReference type="Rhea" id="RHEA:12705"/>
        <dbReference type="Rhea" id="RHEA-COMP:12143"/>
        <dbReference type="Rhea" id="RHEA-COMP:12144"/>
        <dbReference type="ChEBI" id="CHEBI:57856"/>
        <dbReference type="ChEBI" id="CHEBI:59789"/>
        <dbReference type="ChEBI" id="CHEBI:90596"/>
        <dbReference type="ChEBI" id="CHEBI:90598"/>
        <dbReference type="EC" id="2.1.1.77"/>
    </reaction>
</comment>
<comment type="subcellular location">
    <subcellularLocation>
        <location evidence="1">Cytoplasm</location>
    </subcellularLocation>
</comment>
<comment type="similarity">
    <text evidence="1">Belongs to the methyltransferase superfamily. L-isoaspartyl/D-aspartyl protein methyltransferase family.</text>
</comment>
<feature type="chain" id="PRO_0000351919" description="Protein-L-isoaspartate O-methyltransferase">
    <location>
        <begin position="1"/>
        <end position="321"/>
    </location>
</feature>
<feature type="region of interest" description="Disordered" evidence="2">
    <location>
        <begin position="21"/>
        <end position="65"/>
    </location>
</feature>
<feature type="compositionally biased region" description="Basic and acidic residues" evidence="2">
    <location>
        <begin position="21"/>
        <end position="31"/>
    </location>
</feature>
<feature type="compositionally biased region" description="Low complexity" evidence="2">
    <location>
        <begin position="41"/>
        <end position="56"/>
    </location>
</feature>
<feature type="active site" evidence="1">
    <location>
        <position position="153"/>
    </location>
</feature>